<reference key="1">
    <citation type="journal article" date="2008" name="ISME J.">
        <title>Comparative genomics of two ecotypes of the marine planktonic copiotroph Alteromonas macleodii suggests alternative lifestyles associated with different kinds of particulate organic matter.</title>
        <authorList>
            <person name="Ivars-Martinez E."/>
            <person name="Martin-Cuadrado A.-B."/>
            <person name="D'Auria G."/>
            <person name="Mira A."/>
            <person name="Ferriera S."/>
            <person name="Johnson J."/>
            <person name="Friedman R."/>
            <person name="Rodriguez-Valera F."/>
        </authorList>
    </citation>
    <scope>NUCLEOTIDE SEQUENCE [LARGE SCALE GENOMIC DNA]</scope>
    <source>
        <strain>DSM 17117 / CIP 110805 / LMG 28347 / Deep ecotype</strain>
    </source>
</reference>
<name>RL21_ALTMD</name>
<protein>
    <recommendedName>
        <fullName evidence="1">Large ribosomal subunit protein bL21</fullName>
    </recommendedName>
    <alternativeName>
        <fullName evidence="2">50S ribosomal protein L21</fullName>
    </alternativeName>
</protein>
<accession>B4RZH5</accession>
<accession>F2G8B4</accession>
<gene>
    <name evidence="1" type="primary">rplU1</name>
    <name type="ordered locus">MADE_1003335</name>
</gene>
<gene>
    <name evidence="1" type="primary">rplU2</name>
    <name type="ordered locus">MADE_1018715</name>
</gene>
<dbReference type="EMBL" id="CP001103">
    <property type="protein sequence ID" value="AEA96815.1"/>
    <property type="molecule type" value="Genomic_DNA"/>
</dbReference>
<dbReference type="EMBL" id="CP001103">
    <property type="protein sequence ID" value="AEA99867.1"/>
    <property type="molecule type" value="Genomic_DNA"/>
</dbReference>
<dbReference type="SMR" id="B4RZH5"/>
<dbReference type="KEGG" id="amc:MADE_1003335"/>
<dbReference type="HOGENOM" id="CLU_061463_3_3_6"/>
<dbReference type="Proteomes" id="UP000001870">
    <property type="component" value="Chromosome"/>
</dbReference>
<dbReference type="GO" id="GO:0005737">
    <property type="term" value="C:cytoplasm"/>
    <property type="evidence" value="ECO:0007669"/>
    <property type="project" value="UniProtKB-ARBA"/>
</dbReference>
<dbReference type="GO" id="GO:1990904">
    <property type="term" value="C:ribonucleoprotein complex"/>
    <property type="evidence" value="ECO:0007669"/>
    <property type="project" value="UniProtKB-KW"/>
</dbReference>
<dbReference type="GO" id="GO:0005840">
    <property type="term" value="C:ribosome"/>
    <property type="evidence" value="ECO:0007669"/>
    <property type="project" value="UniProtKB-KW"/>
</dbReference>
<dbReference type="GO" id="GO:0019843">
    <property type="term" value="F:rRNA binding"/>
    <property type="evidence" value="ECO:0007669"/>
    <property type="project" value="UniProtKB-UniRule"/>
</dbReference>
<dbReference type="GO" id="GO:0003735">
    <property type="term" value="F:structural constituent of ribosome"/>
    <property type="evidence" value="ECO:0007669"/>
    <property type="project" value="InterPro"/>
</dbReference>
<dbReference type="GO" id="GO:0006412">
    <property type="term" value="P:translation"/>
    <property type="evidence" value="ECO:0007669"/>
    <property type="project" value="UniProtKB-UniRule"/>
</dbReference>
<dbReference type="HAMAP" id="MF_01363">
    <property type="entry name" value="Ribosomal_bL21"/>
    <property type="match status" value="1"/>
</dbReference>
<dbReference type="InterPro" id="IPR028909">
    <property type="entry name" value="bL21-like"/>
</dbReference>
<dbReference type="InterPro" id="IPR036164">
    <property type="entry name" value="bL21-like_sf"/>
</dbReference>
<dbReference type="InterPro" id="IPR001787">
    <property type="entry name" value="Ribosomal_bL21"/>
</dbReference>
<dbReference type="InterPro" id="IPR018258">
    <property type="entry name" value="Ribosomal_bL21_CS"/>
</dbReference>
<dbReference type="NCBIfam" id="TIGR00061">
    <property type="entry name" value="L21"/>
    <property type="match status" value="1"/>
</dbReference>
<dbReference type="PANTHER" id="PTHR21349">
    <property type="entry name" value="50S RIBOSOMAL PROTEIN L21"/>
    <property type="match status" value="1"/>
</dbReference>
<dbReference type="PANTHER" id="PTHR21349:SF0">
    <property type="entry name" value="LARGE RIBOSOMAL SUBUNIT PROTEIN BL21M"/>
    <property type="match status" value="1"/>
</dbReference>
<dbReference type="Pfam" id="PF00829">
    <property type="entry name" value="Ribosomal_L21p"/>
    <property type="match status" value="1"/>
</dbReference>
<dbReference type="SUPFAM" id="SSF141091">
    <property type="entry name" value="L21p-like"/>
    <property type="match status" value="1"/>
</dbReference>
<dbReference type="PROSITE" id="PS01169">
    <property type="entry name" value="RIBOSOMAL_L21"/>
    <property type="match status" value="1"/>
</dbReference>
<comment type="function">
    <text evidence="1">This protein binds to 23S rRNA in the presence of protein L20.</text>
</comment>
<comment type="subunit">
    <text evidence="1">Part of the 50S ribosomal subunit. Contacts protein L20.</text>
</comment>
<comment type="similarity">
    <text evidence="1">Belongs to the bacterial ribosomal protein bL21 family.</text>
</comment>
<sequence length="103" mass="11397">MYAVFQSGGKQHRVAEGQTVRLEKIEVAPGETVEFDKVLMVSNGDDVKIGTPIVAGGKVTAEVVTHGRGDKVKIVKFRRRKHSRKQAGHRQWFTEVKITGINA</sequence>
<feature type="chain" id="PRO_1000143749" description="Large ribosomal subunit protein bL21">
    <location>
        <begin position="1"/>
        <end position="103"/>
    </location>
</feature>
<keyword id="KW-0687">Ribonucleoprotein</keyword>
<keyword id="KW-0689">Ribosomal protein</keyword>
<keyword id="KW-0694">RNA-binding</keyword>
<keyword id="KW-0699">rRNA-binding</keyword>
<organism>
    <name type="scientific">Alteromonas mediterranea (strain DSM 17117 / CIP 110805 / LMG 28347 / Deep ecotype)</name>
    <dbReference type="NCBI Taxonomy" id="1774373"/>
    <lineage>
        <taxon>Bacteria</taxon>
        <taxon>Pseudomonadati</taxon>
        <taxon>Pseudomonadota</taxon>
        <taxon>Gammaproteobacteria</taxon>
        <taxon>Alteromonadales</taxon>
        <taxon>Alteromonadaceae</taxon>
        <taxon>Alteromonas/Salinimonas group</taxon>
        <taxon>Alteromonas</taxon>
    </lineage>
</organism>
<evidence type="ECO:0000255" key="1">
    <source>
        <dbReference type="HAMAP-Rule" id="MF_01363"/>
    </source>
</evidence>
<evidence type="ECO:0000305" key="2"/>
<proteinExistence type="inferred from homology"/>